<sequence length="545" mass="63701">MKKRILVTCAFPYANGSLHIGHFLEHIQADIWVRYKKMRGHEVWFICADDAHGTPIMLKSQSLKMSPESFISDIYKDHVNDLEKFNINYDNYYSTHSSENSYFLKKIYHILDKKGLIQTRNIFQLFDNTKRVFLPDRFVKGACPICHTKDQYGDHCEVCGSSYSAVELIKPVSMLSGNCPILKKSLHFFFNLPYFESMLRSWVMSGVLQASVVKKLDEWFKLGLREWDISRDSPYFGFNIPGFLDKYFYVWLDAPIGYISTFKNLCTQRNNLNFLDFWKKNSECELYQFIGKDIVYFHSLFWPSILEASNFRKPTKIFVHGHVTINGLKLSKSRGDCILAKNWIKNLDSDSLRYYYASKLSSKIQDIEVNAKHFLYKINSDVVNKIVNLASRVSSFINIYFNNELSSRIDDLALYKRFVTSSSYIEKMLENCEFNSAISMVISLADIANSYVDNKKPWNLTKNIKNSNTLHDICTTVLNLFRILMTWLKPVMPDLAKNSEKFLNIKLEWANICIPLLNHKISIFKALRHRIEDKQIKFLLPNNFE</sequence>
<protein>
    <recommendedName>
        <fullName>Methionine--tRNA ligase</fullName>
        <ecNumber>6.1.1.10</ecNumber>
    </recommendedName>
    <alternativeName>
        <fullName>Methionyl-tRNA synthetase</fullName>
        <shortName>MetRS</shortName>
    </alternativeName>
</protein>
<dbReference type="EC" id="6.1.1.10"/>
<dbReference type="EMBL" id="AE016826">
    <property type="protein sequence ID" value="AAO26838.1"/>
    <property type="molecule type" value="Genomic_DNA"/>
</dbReference>
<dbReference type="RefSeq" id="WP_011091239.1">
    <property type="nucleotide sequence ID" value="NC_004545.1"/>
</dbReference>
<dbReference type="SMR" id="Q89AX4"/>
<dbReference type="STRING" id="224915.bbp_103"/>
<dbReference type="KEGG" id="bab:bbp_103"/>
<dbReference type="eggNOG" id="COG0143">
    <property type="taxonomic scope" value="Bacteria"/>
</dbReference>
<dbReference type="HOGENOM" id="CLU_009710_7_0_6"/>
<dbReference type="OrthoDB" id="9810191at2"/>
<dbReference type="Proteomes" id="UP000000601">
    <property type="component" value="Chromosome"/>
</dbReference>
<dbReference type="GO" id="GO:0005829">
    <property type="term" value="C:cytosol"/>
    <property type="evidence" value="ECO:0007669"/>
    <property type="project" value="TreeGrafter"/>
</dbReference>
<dbReference type="GO" id="GO:0005524">
    <property type="term" value="F:ATP binding"/>
    <property type="evidence" value="ECO:0007669"/>
    <property type="project" value="UniProtKB-UniRule"/>
</dbReference>
<dbReference type="GO" id="GO:0046872">
    <property type="term" value="F:metal ion binding"/>
    <property type="evidence" value="ECO:0007669"/>
    <property type="project" value="UniProtKB-KW"/>
</dbReference>
<dbReference type="GO" id="GO:0004825">
    <property type="term" value="F:methionine-tRNA ligase activity"/>
    <property type="evidence" value="ECO:0007669"/>
    <property type="project" value="UniProtKB-UniRule"/>
</dbReference>
<dbReference type="GO" id="GO:0006431">
    <property type="term" value="P:methionyl-tRNA aminoacylation"/>
    <property type="evidence" value="ECO:0007669"/>
    <property type="project" value="UniProtKB-UniRule"/>
</dbReference>
<dbReference type="CDD" id="cd07957">
    <property type="entry name" value="Anticodon_Ia_Met"/>
    <property type="match status" value="1"/>
</dbReference>
<dbReference type="FunFam" id="2.20.28.20:FF:000001">
    <property type="entry name" value="Methionine--tRNA ligase"/>
    <property type="match status" value="1"/>
</dbReference>
<dbReference type="Gene3D" id="3.40.50.620">
    <property type="entry name" value="HUPs"/>
    <property type="match status" value="1"/>
</dbReference>
<dbReference type="Gene3D" id="1.10.730.10">
    <property type="entry name" value="Isoleucyl-tRNA Synthetase, Domain 1"/>
    <property type="match status" value="1"/>
</dbReference>
<dbReference type="Gene3D" id="2.20.28.20">
    <property type="entry name" value="Methionyl-tRNA synthetase, Zn-domain"/>
    <property type="match status" value="1"/>
</dbReference>
<dbReference type="HAMAP" id="MF_00098">
    <property type="entry name" value="Met_tRNA_synth_type1"/>
    <property type="match status" value="1"/>
</dbReference>
<dbReference type="InterPro" id="IPR001412">
    <property type="entry name" value="aa-tRNA-synth_I_CS"/>
</dbReference>
<dbReference type="InterPro" id="IPR041872">
    <property type="entry name" value="Anticodon_Met"/>
</dbReference>
<dbReference type="InterPro" id="IPR013155">
    <property type="entry name" value="M/V/L/I-tRNA-synth_anticd-bd"/>
</dbReference>
<dbReference type="InterPro" id="IPR023458">
    <property type="entry name" value="Met-tRNA_ligase_1"/>
</dbReference>
<dbReference type="InterPro" id="IPR014758">
    <property type="entry name" value="Met-tRNA_synth"/>
</dbReference>
<dbReference type="InterPro" id="IPR015413">
    <property type="entry name" value="Methionyl/Leucyl_tRNA_Synth"/>
</dbReference>
<dbReference type="InterPro" id="IPR033911">
    <property type="entry name" value="MetRS_core"/>
</dbReference>
<dbReference type="InterPro" id="IPR029038">
    <property type="entry name" value="MetRS_Zn"/>
</dbReference>
<dbReference type="InterPro" id="IPR014729">
    <property type="entry name" value="Rossmann-like_a/b/a_fold"/>
</dbReference>
<dbReference type="InterPro" id="IPR009080">
    <property type="entry name" value="tRNAsynth_Ia_anticodon-bd"/>
</dbReference>
<dbReference type="NCBIfam" id="TIGR00398">
    <property type="entry name" value="metG"/>
    <property type="match status" value="1"/>
</dbReference>
<dbReference type="NCBIfam" id="NF001100">
    <property type="entry name" value="PRK00133.1"/>
    <property type="match status" value="1"/>
</dbReference>
<dbReference type="PANTHER" id="PTHR45765">
    <property type="entry name" value="METHIONINE--TRNA LIGASE"/>
    <property type="match status" value="1"/>
</dbReference>
<dbReference type="PANTHER" id="PTHR45765:SF1">
    <property type="entry name" value="METHIONINE--TRNA LIGASE, CYTOPLASMIC"/>
    <property type="match status" value="1"/>
</dbReference>
<dbReference type="Pfam" id="PF08264">
    <property type="entry name" value="Anticodon_1"/>
    <property type="match status" value="1"/>
</dbReference>
<dbReference type="Pfam" id="PF09334">
    <property type="entry name" value="tRNA-synt_1g"/>
    <property type="match status" value="1"/>
</dbReference>
<dbReference type="PRINTS" id="PR01041">
    <property type="entry name" value="TRNASYNTHMET"/>
</dbReference>
<dbReference type="SUPFAM" id="SSF47323">
    <property type="entry name" value="Anticodon-binding domain of a subclass of class I aminoacyl-tRNA synthetases"/>
    <property type="match status" value="1"/>
</dbReference>
<dbReference type="SUPFAM" id="SSF57770">
    <property type="entry name" value="Methionyl-tRNA synthetase (MetRS), Zn-domain"/>
    <property type="match status" value="1"/>
</dbReference>
<dbReference type="SUPFAM" id="SSF52374">
    <property type="entry name" value="Nucleotidylyl transferase"/>
    <property type="match status" value="1"/>
</dbReference>
<dbReference type="PROSITE" id="PS00178">
    <property type="entry name" value="AA_TRNA_LIGASE_I"/>
    <property type="match status" value="1"/>
</dbReference>
<accession>Q89AX4</accession>
<keyword id="KW-0030">Aminoacyl-tRNA synthetase</keyword>
<keyword id="KW-0067">ATP-binding</keyword>
<keyword id="KW-0963">Cytoplasm</keyword>
<keyword id="KW-0436">Ligase</keyword>
<keyword id="KW-0479">Metal-binding</keyword>
<keyword id="KW-0547">Nucleotide-binding</keyword>
<keyword id="KW-0648">Protein biosynthesis</keyword>
<keyword id="KW-1185">Reference proteome</keyword>
<keyword id="KW-0862">Zinc</keyword>
<organism>
    <name type="scientific">Buchnera aphidicola subsp. Baizongia pistaciae (strain Bp)</name>
    <dbReference type="NCBI Taxonomy" id="224915"/>
    <lineage>
        <taxon>Bacteria</taxon>
        <taxon>Pseudomonadati</taxon>
        <taxon>Pseudomonadota</taxon>
        <taxon>Gammaproteobacteria</taxon>
        <taxon>Enterobacterales</taxon>
        <taxon>Erwiniaceae</taxon>
        <taxon>Buchnera</taxon>
    </lineage>
</organism>
<name>SYM_BUCBP</name>
<feature type="chain" id="PRO_0000139113" description="Methionine--tRNA ligase">
    <location>
        <begin position="1"/>
        <end position="545"/>
    </location>
</feature>
<feature type="short sequence motif" description="'HIGH' region">
    <location>
        <begin position="12"/>
        <end position="22"/>
    </location>
</feature>
<feature type="short sequence motif" description="'KMSKS' region">
    <location>
        <begin position="329"/>
        <end position="333"/>
    </location>
</feature>
<feature type="binding site" evidence="1">
    <location>
        <position position="143"/>
    </location>
    <ligand>
        <name>Zn(2+)</name>
        <dbReference type="ChEBI" id="CHEBI:29105"/>
    </ligand>
</feature>
<feature type="binding site" evidence="1">
    <location>
        <position position="146"/>
    </location>
    <ligand>
        <name>Zn(2+)</name>
        <dbReference type="ChEBI" id="CHEBI:29105"/>
    </ligand>
</feature>
<feature type="binding site" evidence="1">
    <location>
        <position position="156"/>
    </location>
    <ligand>
        <name>Zn(2+)</name>
        <dbReference type="ChEBI" id="CHEBI:29105"/>
    </ligand>
</feature>
<feature type="binding site" evidence="1">
    <location>
        <position position="159"/>
    </location>
    <ligand>
        <name>Zn(2+)</name>
        <dbReference type="ChEBI" id="CHEBI:29105"/>
    </ligand>
</feature>
<feature type="binding site" evidence="1">
    <location>
        <position position="332"/>
    </location>
    <ligand>
        <name>ATP</name>
        <dbReference type="ChEBI" id="CHEBI:30616"/>
    </ligand>
</feature>
<comment type="function">
    <text evidence="1">Is required not only for elongation of protein synthesis but also for the initiation of all mRNA translation through initiator tRNA(fMet) aminoacylation.</text>
</comment>
<comment type="catalytic activity">
    <reaction>
        <text>tRNA(Met) + L-methionine + ATP = L-methionyl-tRNA(Met) + AMP + diphosphate</text>
        <dbReference type="Rhea" id="RHEA:13481"/>
        <dbReference type="Rhea" id="RHEA-COMP:9667"/>
        <dbReference type="Rhea" id="RHEA-COMP:9698"/>
        <dbReference type="ChEBI" id="CHEBI:30616"/>
        <dbReference type="ChEBI" id="CHEBI:33019"/>
        <dbReference type="ChEBI" id="CHEBI:57844"/>
        <dbReference type="ChEBI" id="CHEBI:78442"/>
        <dbReference type="ChEBI" id="CHEBI:78530"/>
        <dbReference type="ChEBI" id="CHEBI:456215"/>
        <dbReference type="EC" id="6.1.1.10"/>
    </reaction>
</comment>
<comment type="cofactor">
    <cofactor evidence="1">
        <name>Zn(2+)</name>
        <dbReference type="ChEBI" id="CHEBI:29105"/>
    </cofactor>
    <text evidence="1">Binds 1 zinc ion per subunit.</text>
</comment>
<comment type="subunit">
    <text evidence="1">Monomer.</text>
</comment>
<comment type="subcellular location">
    <subcellularLocation>
        <location evidence="1">Cytoplasm</location>
    </subcellularLocation>
</comment>
<comment type="similarity">
    <text evidence="2">Belongs to the class-I aminoacyl-tRNA synthetase family. MetG type 1 subfamily.</text>
</comment>
<reference key="1">
    <citation type="journal article" date="2003" name="Proc. Natl. Acad. Sci. U.S.A.">
        <title>Reductive genome evolution in Buchnera aphidicola.</title>
        <authorList>
            <person name="van Ham R.C.H.J."/>
            <person name="Kamerbeek J."/>
            <person name="Palacios C."/>
            <person name="Rausell C."/>
            <person name="Abascal F."/>
            <person name="Bastolla U."/>
            <person name="Fernandez J.M."/>
            <person name="Jimenez L."/>
            <person name="Postigo M."/>
            <person name="Silva F.J."/>
            <person name="Tamames J."/>
            <person name="Viguera E."/>
            <person name="Latorre A."/>
            <person name="Valencia A."/>
            <person name="Moran F."/>
            <person name="Moya A."/>
        </authorList>
    </citation>
    <scope>NUCLEOTIDE SEQUENCE [LARGE SCALE GENOMIC DNA]</scope>
    <source>
        <strain>Bp</strain>
    </source>
</reference>
<evidence type="ECO:0000250" key="1"/>
<evidence type="ECO:0000305" key="2"/>
<proteinExistence type="inferred from homology"/>
<gene>
    <name type="primary">metG</name>
    <name type="ordered locus">bbp_103</name>
</gene>